<accession>P41348</accession>
<reference key="1">
    <citation type="journal article" date="1993" name="Biochim. Biophys. Acta">
        <title>Cloning and sequencing of a corn (Zea mays) nuclear gene coding for the chloroplast specific catalytic subunit of ferredoxin-thioredoxin reductase.</title>
        <authorList>
            <person name="Marc-Martin S."/>
            <person name="Spielmann A."/>
            <person name="Stutz E."/>
            <person name="Schuermann P."/>
        </authorList>
    </citation>
    <scope>NUCLEOTIDE SEQUENCE [MRNA]</scope>
</reference>
<reference key="2">
    <citation type="submission" date="1995-11" db="EMBL/GenBank/DDBJ databases">
        <authorList>
            <person name="Schuermann P."/>
        </authorList>
    </citation>
    <scope>SEQUENCE REVISION TO 26</scope>
</reference>
<reference key="3">
    <citation type="book" date="1992" name="Research in photosynthesis">
        <editorList>
            <person name="Murata N."/>
        </editorList>
        <authorList>
            <person name="Iwadate H."/>
            <person name="Yano K."/>
            <person name="Aso K."/>
            <person name="Kamo M."/>
            <person name="Gardet-Salvi L."/>
            <person name="Schuermann P."/>
            <person name="Tsugita A."/>
        </authorList>
    </citation>
    <scope>PROTEIN SEQUENCE OF 32-144</scope>
    <scope>CATALYTIC ACTIVITY</scope>
</reference>
<reference key="4">
    <citation type="journal article" date="1995" name="Eur. J. Biochem.">
        <title>Amino acid sequence of spinach ferredoxin:thioredoxin reductase catalytic subunit and identification of thiol groups constituting a redox-active disulfide and a [4Fe-4S] cluster.</title>
        <authorList>
            <person name="Chow L.-P."/>
            <person name="Iwadate H."/>
            <person name="Yano K."/>
            <person name="Kamo M."/>
            <person name="Tsugita A."/>
            <person name="Gardet-Salvi L."/>
            <person name="Stritt-Etter A.-L."/>
            <person name="Schuermann P."/>
        </authorList>
    </citation>
    <scope>PROTEIN SEQUENCE OF 32-144</scope>
    <source>
        <tissue>Leaf</tissue>
    </source>
</reference>
<comment type="function">
    <text>Catalytic subunit of the ferredoxin-thioredoxin reductase (FTR), which catalyzes the two-electron reduction of thioredoxins by the electrons provided by reduced ferredoxin.</text>
</comment>
<comment type="catalytic activity">
    <reaction evidence="3">
        <text>[thioredoxin]-disulfide + 2 reduced [2Fe-2S]-[ferredoxin] + 2 H(+) = [thioredoxin]-dithiol + 2 oxidized [2Fe-2S]-[ferredoxin]</text>
        <dbReference type="Rhea" id="RHEA:42336"/>
        <dbReference type="Rhea" id="RHEA-COMP:10000"/>
        <dbReference type="Rhea" id="RHEA-COMP:10001"/>
        <dbReference type="Rhea" id="RHEA-COMP:10698"/>
        <dbReference type="Rhea" id="RHEA-COMP:10700"/>
        <dbReference type="ChEBI" id="CHEBI:15378"/>
        <dbReference type="ChEBI" id="CHEBI:29950"/>
        <dbReference type="ChEBI" id="CHEBI:33737"/>
        <dbReference type="ChEBI" id="CHEBI:33738"/>
        <dbReference type="ChEBI" id="CHEBI:50058"/>
        <dbReference type="EC" id="1.8.7.2"/>
    </reaction>
</comment>
<comment type="cofactor">
    <cofactor>
        <name>[4Fe-4S] cluster</name>
        <dbReference type="ChEBI" id="CHEBI:49883"/>
    </cofactor>
    <text>Binds 1 [4Fe-4S] cluster.</text>
</comment>
<comment type="subunit">
    <text>Heterodimer of subunit A (variable subunit) and subunit B (catalytic subunit). Heterodimeric FTR forms a complex with ferredoxin and thioredoxin.</text>
</comment>
<comment type="subcellular location">
    <subcellularLocation>
        <location>Plastid</location>
        <location>Chloroplast</location>
    </subcellularLocation>
</comment>
<comment type="similarity">
    <text evidence="4">Belongs to the ferredoxin thioredoxin reductase beta subunit family.</text>
</comment>
<evidence type="ECO:0000250" key="1"/>
<evidence type="ECO:0000269" key="2">
    <source>
    </source>
</evidence>
<evidence type="ECO:0000269" key="3">
    <source ref="3"/>
</evidence>
<evidence type="ECO:0000305" key="4"/>
<sequence>MKALQASIAYSFPISSPAASPRRFSRVIRAQADPSDKSMEVMRKFSEQFCRKSDTYFCVDKSVTAVVIKGLADHRDTLGAPLCPCRHYDDKEAEAKQGFWNCPCVPMRERKECHCMLFLTPDNDFAGKEQTITLDEIREVTSNM</sequence>
<keyword id="KW-0004">4Fe-4S</keyword>
<keyword id="KW-0150">Chloroplast</keyword>
<keyword id="KW-0903">Direct protein sequencing</keyword>
<keyword id="KW-1015">Disulfide bond</keyword>
<keyword id="KW-0408">Iron</keyword>
<keyword id="KW-0411">Iron-sulfur</keyword>
<keyword id="KW-0479">Metal-binding</keyword>
<keyword id="KW-0560">Oxidoreductase</keyword>
<keyword id="KW-0934">Plastid</keyword>
<keyword id="KW-0676">Redox-active center</keyword>
<keyword id="KW-1185">Reference proteome</keyword>
<keyword id="KW-0809">Transit peptide</keyword>
<protein>
    <recommendedName>
        <fullName>Ferredoxin-thioredoxin reductase catalytic chain, chloroplastic</fullName>
        <shortName>FTR-C</shortName>
        <ecNumber>1.8.7.2</ecNumber>
    </recommendedName>
    <alternativeName>
        <fullName>B2</fullName>
    </alternativeName>
    <alternativeName>
        <fullName>Ferredoxin-thioredoxin reductase subunit B</fullName>
        <shortName>FTR-B</shortName>
    </alternativeName>
</protein>
<name>FTRC1_SPIOL</name>
<organism>
    <name type="scientific">Spinacia oleracea</name>
    <name type="common">Spinach</name>
    <dbReference type="NCBI Taxonomy" id="3562"/>
    <lineage>
        <taxon>Eukaryota</taxon>
        <taxon>Viridiplantae</taxon>
        <taxon>Streptophyta</taxon>
        <taxon>Embryophyta</taxon>
        <taxon>Tracheophyta</taxon>
        <taxon>Spermatophyta</taxon>
        <taxon>Magnoliopsida</taxon>
        <taxon>eudicotyledons</taxon>
        <taxon>Gunneridae</taxon>
        <taxon>Pentapetalae</taxon>
        <taxon>Caryophyllales</taxon>
        <taxon>Chenopodiaceae</taxon>
        <taxon>Chenopodioideae</taxon>
        <taxon>Anserineae</taxon>
        <taxon>Spinacia</taxon>
    </lineage>
</organism>
<gene>
    <name type="primary">FTRC</name>
</gene>
<proteinExistence type="evidence at protein level"/>
<feature type="transit peptide" description="Chloroplast" evidence="2 3">
    <location>
        <begin position="1"/>
        <end position="31"/>
    </location>
</feature>
<feature type="chain" id="PRO_0000019428" description="Ferredoxin-thioredoxin reductase catalytic chain, chloroplastic">
    <location>
        <begin position="32"/>
        <end position="144"/>
    </location>
</feature>
<feature type="active site" description="Nucleophile" evidence="1">
    <location>
        <position position="85"/>
    </location>
</feature>
<feature type="binding site">
    <location>
        <position position="83"/>
    </location>
    <ligand>
        <name>[4Fe-4S] cluster</name>
        <dbReference type="ChEBI" id="CHEBI:49883"/>
    </ligand>
</feature>
<feature type="binding site">
    <location>
        <position position="102"/>
    </location>
    <ligand>
        <name>[4Fe-4S] cluster</name>
        <dbReference type="ChEBI" id="CHEBI:49883"/>
    </ligand>
</feature>
<feature type="binding site">
    <location>
        <position position="104"/>
    </location>
    <ligand>
        <name>[4Fe-4S] cluster</name>
        <dbReference type="ChEBI" id="CHEBI:49883"/>
    </ligand>
</feature>
<feature type="binding site">
    <location>
        <position position="113"/>
    </location>
    <ligand>
        <name>[4Fe-4S] cluster</name>
        <dbReference type="ChEBI" id="CHEBI:49883"/>
    </ligand>
</feature>
<feature type="site" description="Increases the nucleophilicity of the active site Cys" evidence="1">
    <location>
        <position position="114"/>
    </location>
</feature>
<feature type="disulfide bond" description="Redox-active">
    <location>
        <begin position="85"/>
        <end position="115"/>
    </location>
</feature>
<dbReference type="EC" id="1.8.7.2"/>
<dbReference type="EMBL" id="X74881">
    <property type="protein sequence ID" value="CAA52867.1"/>
    <property type="molecule type" value="mRNA"/>
</dbReference>
<dbReference type="PIR" id="S65943">
    <property type="entry name" value="RDSPTB"/>
</dbReference>
<dbReference type="SMR" id="P41348"/>
<dbReference type="KEGG" id="ag:CAA52867"/>
<dbReference type="OrthoDB" id="1641at2759"/>
<dbReference type="BRENDA" id="1.8.7.2">
    <property type="organism ID" value="5812"/>
</dbReference>
<dbReference type="Proteomes" id="UP001155700">
    <property type="component" value="Unplaced"/>
</dbReference>
<dbReference type="GO" id="GO:0009507">
    <property type="term" value="C:chloroplast"/>
    <property type="evidence" value="ECO:0007669"/>
    <property type="project" value="UniProtKB-SubCell"/>
</dbReference>
<dbReference type="GO" id="GO:0051539">
    <property type="term" value="F:4 iron, 4 sulfur cluster binding"/>
    <property type="evidence" value="ECO:0000250"/>
    <property type="project" value="UniProtKB"/>
</dbReference>
<dbReference type="GO" id="GO:0009055">
    <property type="term" value="F:electron transfer activity"/>
    <property type="evidence" value="ECO:0000250"/>
    <property type="project" value="UniProtKB"/>
</dbReference>
<dbReference type="GO" id="GO:0103012">
    <property type="term" value="F:ferredoxin-thioredoxin reductase activity"/>
    <property type="evidence" value="ECO:0000250"/>
    <property type="project" value="UniProtKB"/>
</dbReference>
<dbReference type="GO" id="GO:0046872">
    <property type="term" value="F:metal ion binding"/>
    <property type="evidence" value="ECO:0007669"/>
    <property type="project" value="UniProtKB-KW"/>
</dbReference>
<dbReference type="GO" id="GO:0016730">
    <property type="term" value="F:oxidoreductase activity, acting on iron-sulfur proteins as donors"/>
    <property type="evidence" value="ECO:0007669"/>
    <property type="project" value="InterPro"/>
</dbReference>
<dbReference type="FunFam" id="3.90.460.10:FF:000001">
    <property type="entry name" value="Ferredoxin-thioredoxin reductase, catalytic chain"/>
    <property type="match status" value="1"/>
</dbReference>
<dbReference type="Gene3D" id="3.90.460.10">
    <property type="entry name" value="Ferredoxin thioredoxin reductase catalytic beta subunit"/>
    <property type="match status" value="1"/>
</dbReference>
<dbReference type="InterPro" id="IPR004209">
    <property type="entry name" value="FTR_bsu"/>
</dbReference>
<dbReference type="InterPro" id="IPR036644">
    <property type="entry name" value="FTR_bsu_sf"/>
</dbReference>
<dbReference type="PANTHER" id="PTHR35113">
    <property type="entry name" value="FERREDOXIN-THIOREDOXIN REDUCTASE CATALYTIC CHAIN, CHLOROPLASTIC"/>
    <property type="match status" value="1"/>
</dbReference>
<dbReference type="PANTHER" id="PTHR35113:SF1">
    <property type="entry name" value="FERREDOXIN-THIOREDOXIN REDUCTASE CATALYTIC CHAIN, CHLOROPLASTIC"/>
    <property type="match status" value="1"/>
</dbReference>
<dbReference type="Pfam" id="PF02943">
    <property type="entry name" value="FeThRed_B"/>
    <property type="match status" value="1"/>
</dbReference>
<dbReference type="SUPFAM" id="SSF57662">
    <property type="entry name" value="Ferredoxin thioredoxin reductase (FTR), catalytic beta chain"/>
    <property type="match status" value="1"/>
</dbReference>